<accession>Q485J2</accession>
<evidence type="ECO:0000255" key="1">
    <source>
        <dbReference type="HAMAP-Rule" id="MF_00178"/>
    </source>
</evidence>
<gene>
    <name evidence="1" type="primary">ribH</name>
    <name type="ordered locus">CPS_1531</name>
</gene>
<organism>
    <name type="scientific">Colwellia psychrerythraea (strain 34H / ATCC BAA-681)</name>
    <name type="common">Vibrio psychroerythus</name>
    <dbReference type="NCBI Taxonomy" id="167879"/>
    <lineage>
        <taxon>Bacteria</taxon>
        <taxon>Pseudomonadati</taxon>
        <taxon>Pseudomonadota</taxon>
        <taxon>Gammaproteobacteria</taxon>
        <taxon>Alteromonadales</taxon>
        <taxon>Colwelliaceae</taxon>
        <taxon>Colwellia</taxon>
    </lineage>
</organism>
<dbReference type="EC" id="2.5.1.78" evidence="1"/>
<dbReference type="EMBL" id="CP000083">
    <property type="protein sequence ID" value="AAZ25262.1"/>
    <property type="molecule type" value="Genomic_DNA"/>
</dbReference>
<dbReference type="SMR" id="Q485J2"/>
<dbReference type="STRING" id="167879.CPS_1531"/>
<dbReference type="KEGG" id="cps:CPS_1531"/>
<dbReference type="eggNOG" id="COG0054">
    <property type="taxonomic scope" value="Bacteria"/>
</dbReference>
<dbReference type="HOGENOM" id="CLU_089358_1_1_6"/>
<dbReference type="UniPathway" id="UPA00275">
    <property type="reaction ID" value="UER00404"/>
</dbReference>
<dbReference type="Proteomes" id="UP000000547">
    <property type="component" value="Chromosome"/>
</dbReference>
<dbReference type="GO" id="GO:0005829">
    <property type="term" value="C:cytosol"/>
    <property type="evidence" value="ECO:0007669"/>
    <property type="project" value="TreeGrafter"/>
</dbReference>
<dbReference type="GO" id="GO:0009349">
    <property type="term" value="C:riboflavin synthase complex"/>
    <property type="evidence" value="ECO:0007669"/>
    <property type="project" value="InterPro"/>
</dbReference>
<dbReference type="GO" id="GO:0000906">
    <property type="term" value="F:6,7-dimethyl-8-ribityllumazine synthase activity"/>
    <property type="evidence" value="ECO:0007669"/>
    <property type="project" value="UniProtKB-UniRule"/>
</dbReference>
<dbReference type="GO" id="GO:0009231">
    <property type="term" value="P:riboflavin biosynthetic process"/>
    <property type="evidence" value="ECO:0007669"/>
    <property type="project" value="UniProtKB-UniRule"/>
</dbReference>
<dbReference type="CDD" id="cd09209">
    <property type="entry name" value="Lumazine_synthase-I"/>
    <property type="match status" value="1"/>
</dbReference>
<dbReference type="FunFam" id="3.40.50.960:FF:000001">
    <property type="entry name" value="6,7-dimethyl-8-ribityllumazine synthase"/>
    <property type="match status" value="1"/>
</dbReference>
<dbReference type="Gene3D" id="3.40.50.960">
    <property type="entry name" value="Lumazine/riboflavin synthase"/>
    <property type="match status" value="1"/>
</dbReference>
<dbReference type="HAMAP" id="MF_00178">
    <property type="entry name" value="Lumazine_synth"/>
    <property type="match status" value="1"/>
</dbReference>
<dbReference type="InterPro" id="IPR034964">
    <property type="entry name" value="LS"/>
</dbReference>
<dbReference type="InterPro" id="IPR002180">
    <property type="entry name" value="LS/RS"/>
</dbReference>
<dbReference type="InterPro" id="IPR036467">
    <property type="entry name" value="LS/RS_sf"/>
</dbReference>
<dbReference type="NCBIfam" id="TIGR00114">
    <property type="entry name" value="lumazine-synth"/>
    <property type="match status" value="1"/>
</dbReference>
<dbReference type="NCBIfam" id="NF000812">
    <property type="entry name" value="PRK00061.1-4"/>
    <property type="match status" value="1"/>
</dbReference>
<dbReference type="PANTHER" id="PTHR21058:SF0">
    <property type="entry name" value="6,7-DIMETHYL-8-RIBITYLLUMAZINE SYNTHASE"/>
    <property type="match status" value="1"/>
</dbReference>
<dbReference type="PANTHER" id="PTHR21058">
    <property type="entry name" value="6,7-DIMETHYL-8-RIBITYLLUMAZINE SYNTHASE DMRL SYNTHASE LUMAZINE SYNTHASE"/>
    <property type="match status" value="1"/>
</dbReference>
<dbReference type="Pfam" id="PF00885">
    <property type="entry name" value="DMRL_synthase"/>
    <property type="match status" value="1"/>
</dbReference>
<dbReference type="SUPFAM" id="SSF52121">
    <property type="entry name" value="Lumazine synthase"/>
    <property type="match status" value="1"/>
</dbReference>
<protein>
    <recommendedName>
        <fullName evidence="1">6,7-dimethyl-8-ribityllumazine synthase</fullName>
        <shortName evidence="1">DMRL synthase</shortName>
        <shortName evidence="1">LS</shortName>
        <shortName evidence="1">Lumazine synthase</shortName>
        <ecNumber evidence="1">2.5.1.78</ecNumber>
    </recommendedName>
</protein>
<comment type="function">
    <text evidence="1">Catalyzes the formation of 6,7-dimethyl-8-ribityllumazine by condensation of 5-amino-6-(D-ribitylamino)uracil with 3,4-dihydroxy-2-butanone 4-phosphate. This is the penultimate step in the biosynthesis of riboflavin.</text>
</comment>
<comment type="catalytic activity">
    <reaction evidence="1">
        <text>(2S)-2-hydroxy-3-oxobutyl phosphate + 5-amino-6-(D-ribitylamino)uracil = 6,7-dimethyl-8-(1-D-ribityl)lumazine + phosphate + 2 H2O + H(+)</text>
        <dbReference type="Rhea" id="RHEA:26152"/>
        <dbReference type="ChEBI" id="CHEBI:15377"/>
        <dbReference type="ChEBI" id="CHEBI:15378"/>
        <dbReference type="ChEBI" id="CHEBI:15934"/>
        <dbReference type="ChEBI" id="CHEBI:43474"/>
        <dbReference type="ChEBI" id="CHEBI:58201"/>
        <dbReference type="ChEBI" id="CHEBI:58830"/>
        <dbReference type="EC" id="2.5.1.78"/>
    </reaction>
</comment>
<comment type="pathway">
    <text evidence="1">Cofactor biosynthesis; riboflavin biosynthesis; riboflavin from 2-hydroxy-3-oxobutyl phosphate and 5-amino-6-(D-ribitylamino)uracil: step 1/2.</text>
</comment>
<comment type="subunit">
    <text evidence="1">Forms an icosahedral capsid composed of 60 subunits, arranged as a dodecamer of pentamers.</text>
</comment>
<comment type="similarity">
    <text evidence="1">Belongs to the DMRL synthase family.</text>
</comment>
<reference key="1">
    <citation type="journal article" date="2005" name="Proc. Natl. Acad. Sci. U.S.A.">
        <title>The psychrophilic lifestyle as revealed by the genome sequence of Colwellia psychrerythraea 34H through genomic and proteomic analyses.</title>
        <authorList>
            <person name="Methe B.A."/>
            <person name="Nelson K.E."/>
            <person name="Deming J.W."/>
            <person name="Momen B."/>
            <person name="Melamud E."/>
            <person name="Zhang X."/>
            <person name="Moult J."/>
            <person name="Madupu R."/>
            <person name="Nelson W.C."/>
            <person name="Dodson R.J."/>
            <person name="Brinkac L.M."/>
            <person name="Daugherty S.C."/>
            <person name="Durkin A.S."/>
            <person name="DeBoy R.T."/>
            <person name="Kolonay J.F."/>
            <person name="Sullivan S.A."/>
            <person name="Zhou L."/>
            <person name="Davidsen T.M."/>
            <person name="Wu M."/>
            <person name="Huston A.L."/>
            <person name="Lewis M."/>
            <person name="Weaver B."/>
            <person name="Weidman J.F."/>
            <person name="Khouri H."/>
            <person name="Utterback T.R."/>
            <person name="Feldblyum T.V."/>
            <person name="Fraser C.M."/>
        </authorList>
    </citation>
    <scope>NUCLEOTIDE SEQUENCE [LARGE SCALE GENOMIC DNA]</scope>
    <source>
        <strain>34H / ATCC BAA-681</strain>
    </source>
</reference>
<feature type="chain" id="PRO_1000040409" description="6,7-dimethyl-8-ribityllumazine synthase">
    <location>
        <begin position="1"/>
        <end position="154"/>
    </location>
</feature>
<feature type="active site" description="Proton donor" evidence="1">
    <location>
        <position position="89"/>
    </location>
</feature>
<feature type="binding site" evidence="1">
    <location>
        <position position="22"/>
    </location>
    <ligand>
        <name>5-amino-6-(D-ribitylamino)uracil</name>
        <dbReference type="ChEBI" id="CHEBI:15934"/>
    </ligand>
</feature>
<feature type="binding site" evidence="1">
    <location>
        <begin position="57"/>
        <end position="59"/>
    </location>
    <ligand>
        <name>5-amino-6-(D-ribitylamino)uracil</name>
        <dbReference type="ChEBI" id="CHEBI:15934"/>
    </ligand>
</feature>
<feature type="binding site" evidence="1">
    <location>
        <begin position="81"/>
        <end position="83"/>
    </location>
    <ligand>
        <name>5-amino-6-(D-ribitylamino)uracil</name>
        <dbReference type="ChEBI" id="CHEBI:15934"/>
    </ligand>
</feature>
<feature type="binding site" evidence="1">
    <location>
        <begin position="86"/>
        <end position="87"/>
    </location>
    <ligand>
        <name>(2S)-2-hydroxy-3-oxobutyl phosphate</name>
        <dbReference type="ChEBI" id="CHEBI:58830"/>
    </ligand>
</feature>
<feature type="binding site" evidence="1">
    <location>
        <position position="114"/>
    </location>
    <ligand>
        <name>5-amino-6-(D-ribitylamino)uracil</name>
        <dbReference type="ChEBI" id="CHEBI:15934"/>
    </ligand>
</feature>
<feature type="binding site" evidence="1">
    <location>
        <position position="128"/>
    </location>
    <ligand>
        <name>(2S)-2-hydroxy-3-oxobutyl phosphate</name>
        <dbReference type="ChEBI" id="CHEBI:58830"/>
    </ligand>
</feature>
<name>RISB_COLP3</name>
<sequence>MNIIEGSFEAKGKKFAIVVSRFNHFIVDSLLDGAVDALKRHGNVNDEDITIVRVPGAYELPLAAKKIAKKGEADAIIAIGAVIRGGTPHFDFVAGESNKGLAQVCLESEIPVSFGVITTDSIEQAIERAGTKAGNKGAEAALGALEMVNVLAQI</sequence>
<proteinExistence type="inferred from homology"/>
<keyword id="KW-0686">Riboflavin biosynthesis</keyword>
<keyword id="KW-0808">Transferase</keyword>